<comment type="function">
    <text evidence="1 7">Dual function macrocyclase-peptidase involved in the biosynthesis of the highly toxic amanitin toxin family of macrocycles (PubMed:20889720). Cleaves peptide bonds on the C-terminal side of prolyl residues (By similarity). The enzyme first removes 10 residues from the N-terminus of a 35-residue substrate (By similarity). Conformational trapping of the 25 amino-acid peptide forces the enzyme to release this intermediate rather than proceed to macrocyclization (By similarity). The enzyme rebinds the 25 amino-acid peptide in a different conformation and catalyzes macrocyclization of the N-terminal eight residues (By similarity).</text>
</comment>
<comment type="catalytic activity">
    <reaction>
        <text>Hydrolysis of Pro-|-Xaa &gt;&gt; Ala-|-Xaa in oligopeptides.</text>
        <dbReference type="EC" id="3.4.21.26"/>
    </reaction>
</comment>
<comment type="subunit">
    <text evidence="2">Monomer.</text>
</comment>
<comment type="tissue specificity">
    <text evidence="4">Expressed in the pileus (cap) and lamellae where it colocalizes with amanitin (PubMed:20889720).</text>
</comment>
<comment type="similarity">
    <text evidence="6">Belongs to the peptidase S9A family.</text>
</comment>
<proteinExistence type="evidence at transcript level"/>
<keyword id="KW-0378">Hydrolase</keyword>
<keyword id="KW-0645">Protease</keyword>
<keyword id="KW-0720">Serine protease</keyword>
<name>POPB_AMABI</name>
<feature type="chain" id="PRO_0000443716" description="Dual function macrocyclase-peptidase POPB">
    <location>
        <begin position="1"/>
        <end position="730"/>
    </location>
</feature>
<feature type="active site" description="Charge relay system" evidence="3">
    <location>
        <position position="577"/>
    </location>
</feature>
<feature type="active site" description="Charge relay system" evidence="3">
    <location>
        <position position="661"/>
    </location>
</feature>
<feature type="active site" description="Charge relay system" evidence="3">
    <location>
        <position position="698"/>
    </location>
</feature>
<gene>
    <name evidence="5" type="primary">POPB</name>
</gene>
<organism>
    <name type="scientific">Amanita bisporigera</name>
    <name type="common">Destroying angel</name>
    <dbReference type="NCBI Taxonomy" id="87325"/>
    <lineage>
        <taxon>Eukaryota</taxon>
        <taxon>Fungi</taxon>
        <taxon>Dikarya</taxon>
        <taxon>Basidiomycota</taxon>
        <taxon>Agaricomycotina</taxon>
        <taxon>Agaricomycetes</taxon>
        <taxon>Agaricomycetidae</taxon>
        <taxon>Agaricales</taxon>
        <taxon>Pluteineae</taxon>
        <taxon>Amanitaceae</taxon>
        <taxon>Amanita</taxon>
    </lineage>
</organism>
<dbReference type="EC" id="3.4.21.26" evidence="1"/>
<dbReference type="EMBL" id="HQ225841">
    <property type="protein sequence ID" value="ADN19205.1"/>
    <property type="molecule type" value="mRNA"/>
</dbReference>
<dbReference type="SMR" id="E2JFG2"/>
<dbReference type="ESTHER" id="amabi-popb">
    <property type="family name" value="S9N_PPCE_Peptidase_S9"/>
</dbReference>
<dbReference type="MEROPS" id="S09.077"/>
<dbReference type="BRENDA" id="3.4.21.26">
    <property type="organism ID" value="12947"/>
</dbReference>
<dbReference type="GO" id="GO:0005829">
    <property type="term" value="C:cytosol"/>
    <property type="evidence" value="ECO:0007669"/>
    <property type="project" value="TreeGrafter"/>
</dbReference>
<dbReference type="GO" id="GO:0070012">
    <property type="term" value="F:oligopeptidase activity"/>
    <property type="evidence" value="ECO:0007669"/>
    <property type="project" value="TreeGrafter"/>
</dbReference>
<dbReference type="GO" id="GO:0004252">
    <property type="term" value="F:serine-type endopeptidase activity"/>
    <property type="evidence" value="ECO:0007669"/>
    <property type="project" value="UniProtKB-EC"/>
</dbReference>
<dbReference type="GO" id="GO:0006508">
    <property type="term" value="P:proteolysis"/>
    <property type="evidence" value="ECO:0007669"/>
    <property type="project" value="UniProtKB-KW"/>
</dbReference>
<dbReference type="FunFam" id="3.40.50.1820:FF:000005">
    <property type="entry name" value="Prolyl endopeptidase"/>
    <property type="match status" value="1"/>
</dbReference>
<dbReference type="Gene3D" id="3.40.50.1820">
    <property type="entry name" value="alpha/beta hydrolase"/>
    <property type="match status" value="1"/>
</dbReference>
<dbReference type="Gene3D" id="2.130.10.120">
    <property type="entry name" value="Prolyl oligopeptidase, N-terminal domain"/>
    <property type="match status" value="1"/>
</dbReference>
<dbReference type="InterPro" id="IPR029058">
    <property type="entry name" value="AB_hydrolase_fold"/>
</dbReference>
<dbReference type="InterPro" id="IPR002471">
    <property type="entry name" value="Pept_S9_AS"/>
</dbReference>
<dbReference type="InterPro" id="IPR023302">
    <property type="entry name" value="Pept_S9A_N"/>
</dbReference>
<dbReference type="InterPro" id="IPR001375">
    <property type="entry name" value="Peptidase_S9_cat"/>
</dbReference>
<dbReference type="InterPro" id="IPR002470">
    <property type="entry name" value="Peptidase_S9A"/>
</dbReference>
<dbReference type="InterPro" id="IPR051167">
    <property type="entry name" value="Prolyl_oligopep/macrocyclase"/>
</dbReference>
<dbReference type="PANTHER" id="PTHR42881">
    <property type="entry name" value="PROLYL ENDOPEPTIDASE"/>
    <property type="match status" value="1"/>
</dbReference>
<dbReference type="PANTHER" id="PTHR42881:SF2">
    <property type="entry name" value="PROLYL ENDOPEPTIDASE"/>
    <property type="match status" value="1"/>
</dbReference>
<dbReference type="Pfam" id="PF00326">
    <property type="entry name" value="Peptidase_S9"/>
    <property type="match status" value="1"/>
</dbReference>
<dbReference type="Pfam" id="PF02897">
    <property type="entry name" value="Peptidase_S9_N"/>
    <property type="match status" value="1"/>
</dbReference>
<dbReference type="PRINTS" id="PR00862">
    <property type="entry name" value="PROLIGOPTASE"/>
</dbReference>
<dbReference type="SUPFAM" id="SSF53474">
    <property type="entry name" value="alpha/beta-Hydrolases"/>
    <property type="match status" value="1"/>
</dbReference>
<dbReference type="SUPFAM" id="SSF50993">
    <property type="entry name" value="Peptidase/esterase 'gauge' domain"/>
    <property type="match status" value="1"/>
</dbReference>
<dbReference type="PROSITE" id="PS00708">
    <property type="entry name" value="PRO_ENDOPEP_SER"/>
    <property type="match status" value="1"/>
</dbReference>
<evidence type="ECO:0000250" key="1">
    <source>
        <dbReference type="UniProtKB" id="H2E7Q8"/>
    </source>
</evidence>
<evidence type="ECO:0000250" key="2">
    <source>
        <dbReference type="UniProtKB" id="P48147"/>
    </source>
</evidence>
<evidence type="ECO:0000255" key="3">
    <source>
        <dbReference type="PROSITE-ProRule" id="PRU10084"/>
    </source>
</evidence>
<evidence type="ECO:0000269" key="4">
    <source>
    </source>
</evidence>
<evidence type="ECO:0000303" key="5">
    <source>
    </source>
</evidence>
<evidence type="ECO:0000305" key="6"/>
<evidence type="ECO:0000305" key="7">
    <source>
    </source>
</evidence>
<protein>
    <recommendedName>
        <fullName evidence="1">Dual function macrocyclase-peptidase POPB</fullName>
        <ecNumber evidence="1">3.4.21.26</ecNumber>
    </recommendedName>
    <alternativeName>
        <fullName evidence="5">Prolyl oligopeptidase B</fullName>
        <shortName evidence="5">POP B</shortName>
    </alternativeName>
    <alternativeName>
        <fullName evidence="5">Toxin-processing prolyl oligopeptidase</fullName>
    </alternativeName>
</protein>
<sequence>MPPTPWAPHSYPPTRRSDHVDVYQSASRGEVPVPDPYQWLEENSNEVDEWTTAQTAFTQGYLDKNADRQKLEEKFRASKDYVKFSAPTLLDSGHWYWFYNSGVQSQAVLYRSKKPVLPDFQRGTRKVGEVYFDPNVLSADGTAIMGTCRFSPSGEYFAYAVSHLGVDYFTIYVRPTSSSLSQAPEAEGGDGRLSDGVKWCKFTTITWTKDSKGFLYQRYPARESLVAKDRDKDAMVCYHRVGTTQLEDIIVQQDKENPDWTYGTDASEDGKYIYLVVYKDASKQNLLWVAEFDKDGVKPEIPWRKVINEFGADYHVITNHGSLIYVKTNVNAPQYKVVTIDLSTGEPEIRDFIPEQKDAKLTQVKCVNKGYFVAIYKRNVKDEIYLYSKAGDQLSRLASDFIGVASITNREKQPHSFLTFSGFNTPGTISRYDFTAPDTQRLSILRTTKLNGLNADDFESTQVWYKSKDGTKVPMFIVRHKSTKFDGTAPAIQNGYGGFAITADPFFSPIMLTFMQTYGAILAVPNIRGGGEFGGEWHKAGRRETKGNTFDDFIAAAQFLVKNKYAAPGKVAITGASNGGFLVCGSVVRAPEGTFGAAVSEGGVADLLKFNKFTGGMAWTSEYGNPFIKEDFDFVQALSPVHNVPKDRVLPATLLMTNAGDDRVVPMHSLKFVANLQYNVPQNPHPLLIRVDKSWLGHGFGKTTDKHTKDAADKWSFVAQSLGLEWKTVD</sequence>
<accession>E2JFG2</accession>
<reference key="1">
    <citation type="journal article" date="2010" name="Eukaryot. Cell">
        <title>Colocalization of amanitin and a candidate toxin-processing prolyl oligopeptidase in Amanita basidiocarps.</title>
        <authorList>
            <person name="Luo H."/>
            <person name="Hallen-Adams H.E."/>
            <person name="Scott-Craig J.S."/>
            <person name="Walton J.D."/>
        </authorList>
    </citation>
    <scope>NUCLEOTIDE SEQUENCE [MRNA]</scope>
    <scope>FUNCTION</scope>
    <scope>TISSUE SPECIFICITY</scope>
</reference>